<evidence type="ECO:0000255" key="1">
    <source>
        <dbReference type="HAMAP-Rule" id="MF_00235"/>
    </source>
</evidence>
<evidence type="ECO:0000256" key="2">
    <source>
        <dbReference type="SAM" id="MobiDB-lite"/>
    </source>
</evidence>
<reference key="1">
    <citation type="submission" date="2007-11" db="EMBL/GenBank/DDBJ databases">
        <title>Complete sequence of Delftia acidovorans DSM 14801 / SPH-1.</title>
        <authorList>
            <person name="Copeland A."/>
            <person name="Lucas S."/>
            <person name="Lapidus A."/>
            <person name="Barry K."/>
            <person name="Glavina del Rio T."/>
            <person name="Dalin E."/>
            <person name="Tice H."/>
            <person name="Pitluck S."/>
            <person name="Lowry S."/>
            <person name="Clum A."/>
            <person name="Schmutz J."/>
            <person name="Larimer F."/>
            <person name="Land M."/>
            <person name="Hauser L."/>
            <person name="Kyrpides N."/>
            <person name="Kim E."/>
            <person name="Schleheck D."/>
            <person name="Richardson P."/>
        </authorList>
    </citation>
    <scope>NUCLEOTIDE SEQUENCE [LARGE SCALE GENOMIC DNA]</scope>
    <source>
        <strain>DSM 14801 / SPH-1</strain>
    </source>
</reference>
<name>KAD_DELAS</name>
<sequence>MKLILLGAPGAGKGTQAAFICQKYGIPQISTGDMLRAAVKAGTPLGQQAKAVMDAGQLVSDDLIINLVKERIAQADCANGFLFDGFPRTIPQADAMKAAGVKLDYVLEIDVPFDAIIERMSGRRSHPASGRTYHVKFNPPKVEGQDDVTGEPLVQREDDKEETVKKRLDVYSSQTRPLVDYYRAWAEKEAAAAPKYRAISGLGSVEDITQRALAALAE</sequence>
<gene>
    <name evidence="1" type="primary">adk</name>
    <name type="ordered locus">Daci_3567</name>
</gene>
<proteinExistence type="inferred from homology"/>
<organism>
    <name type="scientific">Delftia acidovorans (strain DSM 14801 / SPH-1)</name>
    <dbReference type="NCBI Taxonomy" id="398578"/>
    <lineage>
        <taxon>Bacteria</taxon>
        <taxon>Pseudomonadati</taxon>
        <taxon>Pseudomonadota</taxon>
        <taxon>Betaproteobacteria</taxon>
        <taxon>Burkholderiales</taxon>
        <taxon>Comamonadaceae</taxon>
        <taxon>Delftia</taxon>
    </lineage>
</organism>
<feature type="chain" id="PRO_1000100556" description="Adenylate kinase">
    <location>
        <begin position="1"/>
        <end position="218"/>
    </location>
</feature>
<feature type="region of interest" description="NMP" evidence="1">
    <location>
        <begin position="30"/>
        <end position="59"/>
    </location>
</feature>
<feature type="region of interest" description="LID" evidence="1">
    <location>
        <begin position="122"/>
        <end position="159"/>
    </location>
</feature>
<feature type="region of interest" description="Disordered" evidence="2">
    <location>
        <begin position="127"/>
        <end position="151"/>
    </location>
</feature>
<feature type="binding site" evidence="1">
    <location>
        <begin position="10"/>
        <end position="15"/>
    </location>
    <ligand>
        <name>ATP</name>
        <dbReference type="ChEBI" id="CHEBI:30616"/>
    </ligand>
</feature>
<feature type="binding site" evidence="1">
    <location>
        <position position="31"/>
    </location>
    <ligand>
        <name>AMP</name>
        <dbReference type="ChEBI" id="CHEBI:456215"/>
    </ligand>
</feature>
<feature type="binding site" evidence="1">
    <location>
        <position position="36"/>
    </location>
    <ligand>
        <name>AMP</name>
        <dbReference type="ChEBI" id="CHEBI:456215"/>
    </ligand>
</feature>
<feature type="binding site" evidence="1">
    <location>
        <begin position="57"/>
        <end position="59"/>
    </location>
    <ligand>
        <name>AMP</name>
        <dbReference type="ChEBI" id="CHEBI:456215"/>
    </ligand>
</feature>
<feature type="binding site" evidence="1">
    <location>
        <begin position="85"/>
        <end position="88"/>
    </location>
    <ligand>
        <name>AMP</name>
        <dbReference type="ChEBI" id="CHEBI:456215"/>
    </ligand>
</feature>
<feature type="binding site" evidence="1">
    <location>
        <position position="92"/>
    </location>
    <ligand>
        <name>AMP</name>
        <dbReference type="ChEBI" id="CHEBI:456215"/>
    </ligand>
</feature>
<feature type="binding site" evidence="1">
    <location>
        <position position="123"/>
    </location>
    <ligand>
        <name>ATP</name>
        <dbReference type="ChEBI" id="CHEBI:30616"/>
    </ligand>
</feature>
<feature type="binding site" evidence="1">
    <location>
        <begin position="132"/>
        <end position="133"/>
    </location>
    <ligand>
        <name>ATP</name>
        <dbReference type="ChEBI" id="CHEBI:30616"/>
    </ligand>
</feature>
<feature type="binding site" evidence="1">
    <location>
        <position position="156"/>
    </location>
    <ligand>
        <name>AMP</name>
        <dbReference type="ChEBI" id="CHEBI:456215"/>
    </ligand>
</feature>
<feature type="binding site" evidence="1">
    <location>
        <position position="167"/>
    </location>
    <ligand>
        <name>AMP</name>
        <dbReference type="ChEBI" id="CHEBI:456215"/>
    </ligand>
</feature>
<feature type="binding site" evidence="1">
    <location>
        <position position="203"/>
    </location>
    <ligand>
        <name>ATP</name>
        <dbReference type="ChEBI" id="CHEBI:30616"/>
    </ligand>
</feature>
<dbReference type="EC" id="2.7.4.3" evidence="1"/>
<dbReference type="EMBL" id="CP000884">
    <property type="protein sequence ID" value="ABX36201.1"/>
    <property type="molecule type" value="Genomic_DNA"/>
</dbReference>
<dbReference type="RefSeq" id="WP_012205401.1">
    <property type="nucleotide sequence ID" value="NC_010002.1"/>
</dbReference>
<dbReference type="SMR" id="A9BWI1"/>
<dbReference type="STRING" id="398578.Daci_3567"/>
<dbReference type="GeneID" id="24118066"/>
<dbReference type="KEGG" id="dac:Daci_3567"/>
<dbReference type="eggNOG" id="COG0563">
    <property type="taxonomic scope" value="Bacteria"/>
</dbReference>
<dbReference type="HOGENOM" id="CLU_032354_1_2_4"/>
<dbReference type="UniPathway" id="UPA00588">
    <property type="reaction ID" value="UER00649"/>
</dbReference>
<dbReference type="Proteomes" id="UP000000784">
    <property type="component" value="Chromosome"/>
</dbReference>
<dbReference type="GO" id="GO:0005737">
    <property type="term" value="C:cytoplasm"/>
    <property type="evidence" value="ECO:0007669"/>
    <property type="project" value="UniProtKB-SubCell"/>
</dbReference>
<dbReference type="GO" id="GO:0004017">
    <property type="term" value="F:adenylate kinase activity"/>
    <property type="evidence" value="ECO:0007669"/>
    <property type="project" value="UniProtKB-UniRule"/>
</dbReference>
<dbReference type="GO" id="GO:0005524">
    <property type="term" value="F:ATP binding"/>
    <property type="evidence" value="ECO:0007669"/>
    <property type="project" value="UniProtKB-UniRule"/>
</dbReference>
<dbReference type="GO" id="GO:0044209">
    <property type="term" value="P:AMP salvage"/>
    <property type="evidence" value="ECO:0007669"/>
    <property type="project" value="UniProtKB-UniRule"/>
</dbReference>
<dbReference type="CDD" id="cd01428">
    <property type="entry name" value="ADK"/>
    <property type="match status" value="1"/>
</dbReference>
<dbReference type="FunFam" id="3.40.50.300:FF:000106">
    <property type="entry name" value="Adenylate kinase mitochondrial"/>
    <property type="match status" value="1"/>
</dbReference>
<dbReference type="Gene3D" id="3.40.50.300">
    <property type="entry name" value="P-loop containing nucleotide triphosphate hydrolases"/>
    <property type="match status" value="1"/>
</dbReference>
<dbReference type="HAMAP" id="MF_00235">
    <property type="entry name" value="Adenylate_kinase_Adk"/>
    <property type="match status" value="1"/>
</dbReference>
<dbReference type="InterPro" id="IPR006259">
    <property type="entry name" value="Adenyl_kin_sub"/>
</dbReference>
<dbReference type="InterPro" id="IPR000850">
    <property type="entry name" value="Adenylat/UMP-CMP_kin"/>
</dbReference>
<dbReference type="InterPro" id="IPR033690">
    <property type="entry name" value="Adenylat_kinase_CS"/>
</dbReference>
<dbReference type="InterPro" id="IPR007862">
    <property type="entry name" value="Adenylate_kinase_lid-dom"/>
</dbReference>
<dbReference type="InterPro" id="IPR027417">
    <property type="entry name" value="P-loop_NTPase"/>
</dbReference>
<dbReference type="NCBIfam" id="TIGR01351">
    <property type="entry name" value="adk"/>
    <property type="match status" value="1"/>
</dbReference>
<dbReference type="NCBIfam" id="NF001379">
    <property type="entry name" value="PRK00279.1-1"/>
    <property type="match status" value="1"/>
</dbReference>
<dbReference type="NCBIfam" id="NF001380">
    <property type="entry name" value="PRK00279.1-2"/>
    <property type="match status" value="1"/>
</dbReference>
<dbReference type="NCBIfam" id="NF001381">
    <property type="entry name" value="PRK00279.1-3"/>
    <property type="match status" value="1"/>
</dbReference>
<dbReference type="NCBIfam" id="NF011100">
    <property type="entry name" value="PRK14527.1"/>
    <property type="match status" value="1"/>
</dbReference>
<dbReference type="PANTHER" id="PTHR23359">
    <property type="entry name" value="NUCLEOTIDE KINASE"/>
    <property type="match status" value="1"/>
</dbReference>
<dbReference type="Pfam" id="PF00406">
    <property type="entry name" value="ADK"/>
    <property type="match status" value="1"/>
</dbReference>
<dbReference type="Pfam" id="PF05191">
    <property type="entry name" value="ADK_lid"/>
    <property type="match status" value="1"/>
</dbReference>
<dbReference type="PRINTS" id="PR00094">
    <property type="entry name" value="ADENYLTKNASE"/>
</dbReference>
<dbReference type="SUPFAM" id="SSF52540">
    <property type="entry name" value="P-loop containing nucleoside triphosphate hydrolases"/>
    <property type="match status" value="1"/>
</dbReference>
<dbReference type="PROSITE" id="PS00113">
    <property type="entry name" value="ADENYLATE_KINASE"/>
    <property type="match status" value="1"/>
</dbReference>
<comment type="function">
    <text evidence="1">Catalyzes the reversible transfer of the terminal phosphate group between ATP and AMP. Plays an important role in cellular energy homeostasis and in adenine nucleotide metabolism.</text>
</comment>
<comment type="catalytic activity">
    <reaction evidence="1">
        <text>AMP + ATP = 2 ADP</text>
        <dbReference type="Rhea" id="RHEA:12973"/>
        <dbReference type="ChEBI" id="CHEBI:30616"/>
        <dbReference type="ChEBI" id="CHEBI:456215"/>
        <dbReference type="ChEBI" id="CHEBI:456216"/>
        <dbReference type="EC" id="2.7.4.3"/>
    </reaction>
</comment>
<comment type="pathway">
    <text evidence="1">Purine metabolism; AMP biosynthesis via salvage pathway; AMP from ADP: step 1/1.</text>
</comment>
<comment type="subunit">
    <text evidence="1">Monomer.</text>
</comment>
<comment type="subcellular location">
    <subcellularLocation>
        <location evidence="1">Cytoplasm</location>
    </subcellularLocation>
</comment>
<comment type="domain">
    <text evidence="1">Consists of three domains, a large central CORE domain and two small peripheral domains, NMPbind and LID, which undergo movements during catalysis. The LID domain closes over the site of phosphoryl transfer upon ATP binding. Assembling and dissambling the active center during each catalytic cycle provides an effective means to prevent ATP hydrolysis.</text>
</comment>
<comment type="similarity">
    <text evidence="1">Belongs to the adenylate kinase family.</text>
</comment>
<protein>
    <recommendedName>
        <fullName evidence="1">Adenylate kinase</fullName>
        <shortName evidence="1">AK</shortName>
        <ecNumber evidence="1">2.7.4.3</ecNumber>
    </recommendedName>
    <alternativeName>
        <fullName evidence="1">ATP-AMP transphosphorylase</fullName>
    </alternativeName>
    <alternativeName>
        <fullName evidence="1">ATP:AMP phosphotransferase</fullName>
    </alternativeName>
    <alternativeName>
        <fullName evidence="1">Adenylate monophosphate kinase</fullName>
    </alternativeName>
</protein>
<keyword id="KW-0067">ATP-binding</keyword>
<keyword id="KW-0963">Cytoplasm</keyword>
<keyword id="KW-0418">Kinase</keyword>
<keyword id="KW-0545">Nucleotide biosynthesis</keyword>
<keyword id="KW-0547">Nucleotide-binding</keyword>
<keyword id="KW-1185">Reference proteome</keyword>
<keyword id="KW-0808">Transferase</keyword>
<accession>A9BWI1</accession>